<feature type="chain" id="PRO_0000118514" description="NAD(P)H-quinone oxidoreductase subunit 4L, chloroplastic">
    <location>
        <begin position="1"/>
        <end position="101"/>
    </location>
</feature>
<feature type="transmembrane region" description="Helical" evidence="1">
    <location>
        <begin position="2"/>
        <end position="22"/>
    </location>
</feature>
<feature type="transmembrane region" description="Helical" evidence="1">
    <location>
        <begin position="32"/>
        <end position="52"/>
    </location>
</feature>
<feature type="transmembrane region" description="Helical" evidence="1">
    <location>
        <begin position="61"/>
        <end position="81"/>
    </location>
</feature>
<reference key="1">
    <citation type="journal article" date="2004" name="Plant Physiol.">
        <title>A comparison of rice chloroplast genomes.</title>
        <authorList>
            <person name="Tang J."/>
            <person name="Xia H."/>
            <person name="Cao M."/>
            <person name="Zhang X."/>
            <person name="Zeng W."/>
            <person name="Hu S."/>
            <person name="Tong W."/>
            <person name="Wang J."/>
            <person name="Wang J."/>
            <person name="Yu J."/>
            <person name="Yang H."/>
            <person name="Zhu L."/>
        </authorList>
    </citation>
    <scope>NUCLEOTIDE SEQUENCE [LARGE SCALE GENOMIC DNA]</scope>
    <source>
        <strain>cv. PA64s</strain>
    </source>
</reference>
<accession>P0C332</accession>
<accession>P12128</accession>
<accession>Q6QXX2</accession>
<accession>Q6QY35</accession>
<proteinExistence type="inferred from homology"/>
<dbReference type="EC" id="7.1.1.-" evidence="1"/>
<dbReference type="EMBL" id="AY522331">
    <property type="protein sequence ID" value="AAS46222.1"/>
    <property type="molecule type" value="Genomic_DNA"/>
</dbReference>
<dbReference type="RefSeq" id="NP_039446.1">
    <property type="nucleotide sequence ID" value="NC_001320.1"/>
</dbReference>
<dbReference type="RefSeq" id="YP_009305364.1">
    <property type="nucleotide sequence ID" value="NC_031333.1"/>
</dbReference>
<dbReference type="SMR" id="P0C332"/>
<dbReference type="GeneID" id="29141440"/>
<dbReference type="GeneID" id="3131399"/>
<dbReference type="KEGG" id="osa:3131399"/>
<dbReference type="GO" id="GO:0009535">
    <property type="term" value="C:chloroplast thylakoid membrane"/>
    <property type="evidence" value="ECO:0007669"/>
    <property type="project" value="UniProtKB-SubCell"/>
</dbReference>
<dbReference type="GO" id="GO:0030964">
    <property type="term" value="C:NADH dehydrogenase complex"/>
    <property type="evidence" value="ECO:0007669"/>
    <property type="project" value="TreeGrafter"/>
</dbReference>
<dbReference type="GO" id="GO:0009536">
    <property type="term" value="C:plastid"/>
    <property type="evidence" value="ECO:0000305"/>
    <property type="project" value="Gramene"/>
</dbReference>
<dbReference type="GO" id="GO:0016655">
    <property type="term" value="F:oxidoreductase activity, acting on NAD(P)H, quinone or similar compound as acceptor"/>
    <property type="evidence" value="ECO:0007669"/>
    <property type="project" value="UniProtKB-UniRule"/>
</dbReference>
<dbReference type="GO" id="GO:0048038">
    <property type="term" value="F:quinone binding"/>
    <property type="evidence" value="ECO:0007669"/>
    <property type="project" value="UniProtKB-KW"/>
</dbReference>
<dbReference type="GO" id="GO:0042773">
    <property type="term" value="P:ATP synthesis coupled electron transport"/>
    <property type="evidence" value="ECO:0007669"/>
    <property type="project" value="InterPro"/>
</dbReference>
<dbReference type="GO" id="GO:0019684">
    <property type="term" value="P:photosynthesis, light reaction"/>
    <property type="evidence" value="ECO:0007669"/>
    <property type="project" value="UniProtKB-UniRule"/>
</dbReference>
<dbReference type="FunFam" id="1.10.287.3510:FF:000001">
    <property type="entry name" value="NADH-quinone oxidoreductase subunit K"/>
    <property type="match status" value="1"/>
</dbReference>
<dbReference type="Gene3D" id="1.10.287.3510">
    <property type="match status" value="1"/>
</dbReference>
<dbReference type="HAMAP" id="MF_01456">
    <property type="entry name" value="NDH1_NuoK"/>
    <property type="match status" value="1"/>
</dbReference>
<dbReference type="InterPro" id="IPR001133">
    <property type="entry name" value="NADH_UbQ_OxRdtase_chain4L/K"/>
</dbReference>
<dbReference type="InterPro" id="IPR039428">
    <property type="entry name" value="NUOK/Mnh_C1-like"/>
</dbReference>
<dbReference type="NCBIfam" id="NF004320">
    <property type="entry name" value="PRK05715.1-2"/>
    <property type="match status" value="1"/>
</dbReference>
<dbReference type="PANTHER" id="PTHR11434:SF16">
    <property type="entry name" value="NADH-UBIQUINONE OXIDOREDUCTASE CHAIN 4L"/>
    <property type="match status" value="1"/>
</dbReference>
<dbReference type="PANTHER" id="PTHR11434">
    <property type="entry name" value="NADH-UBIQUINONE OXIDOREDUCTASE SUBUNIT ND4L"/>
    <property type="match status" value="1"/>
</dbReference>
<dbReference type="Pfam" id="PF00420">
    <property type="entry name" value="Oxidored_q2"/>
    <property type="match status" value="1"/>
</dbReference>
<organism>
    <name type="scientific">Oryza sativa</name>
    <name type="common">Rice</name>
    <dbReference type="NCBI Taxonomy" id="4530"/>
    <lineage>
        <taxon>Eukaryota</taxon>
        <taxon>Viridiplantae</taxon>
        <taxon>Streptophyta</taxon>
        <taxon>Embryophyta</taxon>
        <taxon>Tracheophyta</taxon>
        <taxon>Spermatophyta</taxon>
        <taxon>Magnoliopsida</taxon>
        <taxon>Liliopsida</taxon>
        <taxon>Poales</taxon>
        <taxon>Poaceae</taxon>
        <taxon>BOP clade</taxon>
        <taxon>Oryzoideae</taxon>
        <taxon>Oryzeae</taxon>
        <taxon>Oryzinae</taxon>
        <taxon>Oryza</taxon>
    </lineage>
</organism>
<gene>
    <name evidence="1" type="primary">ndhE</name>
    <name type="ORF">PA171</name>
</gene>
<sequence>MMFEHVLFLSVYLFSIGIYGLITSRNMVRALICLELILNSINLNLVTFSDLFDSRQLKGDIFAIFVIALAAAEAAIGLSILSSIHRNRKSTRINQSNFLNN</sequence>
<geneLocation type="chloroplast"/>
<keyword id="KW-0150">Chloroplast</keyword>
<keyword id="KW-0472">Membrane</keyword>
<keyword id="KW-0520">NAD</keyword>
<keyword id="KW-0521">NADP</keyword>
<keyword id="KW-0934">Plastid</keyword>
<keyword id="KW-0618">Plastoquinone</keyword>
<keyword id="KW-0874">Quinone</keyword>
<keyword id="KW-0793">Thylakoid</keyword>
<keyword id="KW-1278">Translocase</keyword>
<keyword id="KW-0812">Transmembrane</keyword>
<keyword id="KW-1133">Transmembrane helix</keyword>
<keyword id="KW-0813">Transport</keyword>
<comment type="function">
    <text evidence="1">NDH shuttles electrons from NAD(P)H:plastoquinone, via FMN and iron-sulfur (Fe-S) centers, to quinones in the photosynthetic chain and possibly in a chloroplast respiratory chain. The immediate electron acceptor for the enzyme in this species is believed to be plastoquinone. Couples the redox reaction to proton translocation, and thus conserves the redox energy in a proton gradient.</text>
</comment>
<comment type="catalytic activity">
    <reaction evidence="1">
        <text>a plastoquinone + NADH + (n+1) H(+)(in) = a plastoquinol + NAD(+) + n H(+)(out)</text>
        <dbReference type="Rhea" id="RHEA:42608"/>
        <dbReference type="Rhea" id="RHEA-COMP:9561"/>
        <dbReference type="Rhea" id="RHEA-COMP:9562"/>
        <dbReference type="ChEBI" id="CHEBI:15378"/>
        <dbReference type="ChEBI" id="CHEBI:17757"/>
        <dbReference type="ChEBI" id="CHEBI:57540"/>
        <dbReference type="ChEBI" id="CHEBI:57945"/>
        <dbReference type="ChEBI" id="CHEBI:62192"/>
    </reaction>
</comment>
<comment type="catalytic activity">
    <reaction evidence="1">
        <text>a plastoquinone + NADPH + (n+1) H(+)(in) = a plastoquinol + NADP(+) + n H(+)(out)</text>
        <dbReference type="Rhea" id="RHEA:42612"/>
        <dbReference type="Rhea" id="RHEA-COMP:9561"/>
        <dbReference type="Rhea" id="RHEA-COMP:9562"/>
        <dbReference type="ChEBI" id="CHEBI:15378"/>
        <dbReference type="ChEBI" id="CHEBI:17757"/>
        <dbReference type="ChEBI" id="CHEBI:57783"/>
        <dbReference type="ChEBI" id="CHEBI:58349"/>
        <dbReference type="ChEBI" id="CHEBI:62192"/>
    </reaction>
</comment>
<comment type="subunit">
    <text evidence="1">NDH is composed of at least 16 different subunits, 5 of which are encoded in the nucleus.</text>
</comment>
<comment type="subcellular location">
    <subcellularLocation>
        <location evidence="1">Plastid</location>
        <location evidence="1">Chloroplast thylakoid membrane</location>
        <topology evidence="1">Multi-pass membrane protein</topology>
    </subcellularLocation>
</comment>
<comment type="similarity">
    <text evidence="1">Belongs to the complex I subunit 4L family.</text>
</comment>
<protein>
    <recommendedName>
        <fullName evidence="1">NAD(P)H-quinone oxidoreductase subunit 4L, chloroplastic</fullName>
        <ecNumber evidence="1">7.1.1.-</ecNumber>
    </recommendedName>
    <alternativeName>
        <fullName evidence="1">NAD(P)H dehydrogenase subunit 4L</fullName>
    </alternativeName>
    <alternativeName>
        <fullName evidence="1">NADH-plastoquinone oxidoreductase subunit 4L</fullName>
    </alternativeName>
</protein>
<evidence type="ECO:0000255" key="1">
    <source>
        <dbReference type="HAMAP-Rule" id="MF_01456"/>
    </source>
</evidence>
<name>NU4LC_ORYSA</name>